<organism>
    <name type="scientific">Mus musculus</name>
    <name type="common">Mouse</name>
    <dbReference type="NCBI Taxonomy" id="10090"/>
    <lineage>
        <taxon>Eukaryota</taxon>
        <taxon>Metazoa</taxon>
        <taxon>Chordata</taxon>
        <taxon>Craniata</taxon>
        <taxon>Vertebrata</taxon>
        <taxon>Euteleostomi</taxon>
        <taxon>Mammalia</taxon>
        <taxon>Eutheria</taxon>
        <taxon>Euarchontoglires</taxon>
        <taxon>Glires</taxon>
        <taxon>Rodentia</taxon>
        <taxon>Myomorpha</taxon>
        <taxon>Muroidea</taxon>
        <taxon>Muridae</taxon>
        <taxon>Murinae</taxon>
        <taxon>Mus</taxon>
        <taxon>Mus</taxon>
    </lineage>
</organism>
<keyword id="KW-0010">Activator</keyword>
<keyword id="KW-0025">Alternative splicing</keyword>
<keyword id="KW-0131">Cell cycle</keyword>
<keyword id="KW-0156">Chromatin regulator</keyword>
<keyword id="KW-0238">DNA-binding</keyword>
<keyword id="KW-1017">Isopeptide bond</keyword>
<keyword id="KW-0524">Neurogenesis</keyword>
<keyword id="KW-0539">Nucleus</keyword>
<keyword id="KW-0597">Phosphoprotein</keyword>
<keyword id="KW-1185">Reference proteome</keyword>
<keyword id="KW-0677">Repeat</keyword>
<keyword id="KW-0804">Transcription</keyword>
<keyword id="KW-0805">Transcription regulation</keyword>
<keyword id="KW-0043">Tumor suppressor</keyword>
<keyword id="KW-0832">Ubl conjugation</keyword>
<comment type="function">
    <text evidence="1 3 7 8">Core component of the BAF (SWI/SNF) complex. This ATP-dependent chromatin-remodeling complex plays important roles in cell proliferation and differentiation, in cellular antiviral activities and inhibition of tumor formation. The BAF complex is able to create a stable, altered form of chromatin that constrains fewer negative supercoils than normal. This change in supercoiling would be due to the conversion of up to one-half of the nucleosomes on polynucleosomal arrays into asymmetric structures, termed altosomes, each composed of 2 histones octamers. Stimulates in vitro the remodeling activity of SMARCA4/BRG1/BAF190A. Plays a key role in cell-cycle control and causes cell cycle arrest in G0/G1. Belongs to the neural progenitors-specific chromatin remodeling complex (npBAF complex) and the neuron-specific chromatin remodeling complex (nBAF complex). During neural development a switch from a stem/progenitor to a postmitotic chromatin remodeling mechanism occurs as neurons exit the cell cycle and become committed to their adult state. The transition from proliferating neural stem/progenitor cells to postmitotic neurons requires a switch in subunit composition of the npBAF and nBAF complexes. As neural progenitors exit mitosis and differentiate into neurons, npBAF complexes which contain ACTL6A/BAF53A and PHF10/BAF45A, are exchanged for homologous alternative ACTL6B/BAF53B and DPF1/BAF45B or DPF3/BAF45C subunits in neuron-specific complexes (nBAF). The npBAF complex is essential for the self-renewal/proliferative capacity of the multipotent neural stem cells. The nBAF complex along with CREST plays a role regulating the activity of genes essential for dendrite growth.</text>
</comment>
<comment type="subunit">
    <text evidence="1 2 3 4 5 7 8">Component of the multiprotein chromatin-remodeling complexes SWI/SNF: SWI/SNF-A (BAF), SWI/SNF-B (PBAF) and related complexes. The canonical complex contains a catalytic subunit (either SMARCA4/BRG1/BAF190A or SMARCA2/BRM/BAF190B) and at least SMARCE1, ACTL6A/BAF53, SMARCC1/BAF155, SMARCC2/BAF170, and SMARCB1/SNF5/BAF47. Other subunits specific to each of the complexes may also be present permitting several possible combinations developmentally and tissue specific (Probable). Component of the BAF complex, which includes at least actin (ACTB), ARID1A/BAF250A, ARID1B/BAF250B, SMARCA2/BRM, SMARCA4/BRG1/BAF190A, ACTL6A/BAF53, ACTL6B/BAF53B, SMARCE1/BAF57 SMARCC1/BAF155, SMARCC2/BAF170, SMARCB1/SNF5/INI1, and one or more SMARCD1/BAF60A, SMARCD2/BAF60B, or SMARCD3/BAF60C (By similarity). In muscle cells, the BAF complex also contains DPF3. Component of neural progenitors-specific chromatin remodeling complex (npBAF complex) composed of at least, ARID1A/BAF250A or ARID1B/BAF250B, SMARCD1/BAF60A, SMARCD3/BAF60C, SMARCA2/BRM/BAF190B, SMARCA4/BRG1/BAF190A, SMARCB1/BAF47, SMARCC1/BAF155, SMARCE1/BAF57, SMARCC2/BAF170, PHF10/BAF45A, ACTL6A/BAF53A and actin. Component of neuron-specific chromatin remodeling complex (nBAF complex) composed of at least, ARID1A/BAF250A or ARID1B/BAF250B, SMARCD1/BAF60A, SMARCD3/BAF60C, SMARCA2/BRM/BAF190B, SMARCA4/BRG1/BAF190A, SMARCB1/BAF47, SMARCC1/BAF155, SMARCE1/BAF57, SMARCC2/BAF170, DPF1/BAF45B, DPF3/BAF45C, ACTL6B/BAF53B and actin (PubMed:17640523). Component of the SWI/SNF-B (PBAF) chromatin remodeling complex, at least composed of SMARCA4/BRG1, SMARCB1/BAF47/SNF5, ACTL6A/BAF53A or ACTL6B/BAF53B, SMARCE1/BAF57, SMARCD1/BAF60A, SMARCD2/BAF60B, perhaps SMARCD3/BAF60C, SMARCC1/BAF155, SMARCC2/BAF170, PBRM1/BAF180, ARID2/BAF200 and actin (PubMed:26601204). Binds to double-stranded DNA. Interacts with CEBPB (when not methylated) (PubMed:20111005). Interacts with PIH1D1. Interacts with MYK and MAEL (PubMed:16787967). Interacts with PPP1R15A (By similarity). Interacts with DPF2 (By similarity). Interacts with YWHAZ (By similarity). Interacts with ERCC6 (By similarity). Interacts with FOS, FOSB isoform 1 and 2, FOSL1 and FOSL2 (PubMed:29272704).</text>
</comment>
<comment type="interaction">
    <interactant intactId="EBI-689365">
        <id>Q9Z0H3</id>
    </interactant>
    <interactant intactId="EBI-648047">
        <id>P97496</id>
        <label>Smarcc1</label>
    </interactant>
    <organismsDiffer>false</organismsDiffer>
    <experiments>5</experiments>
</comment>
<comment type="subcellular location">
    <subcellularLocation>
        <location>Nucleus</location>
    </subcellularLocation>
</comment>
<comment type="alternative products">
    <event type="alternative splicing"/>
    <isoform>
        <id>Q9Z0H3-1</id>
        <name>A</name>
        <name>INI1A</name>
        <sequence type="displayed"/>
    </isoform>
    <isoform>
        <id>Q9Z0H3-2</id>
        <name>B</name>
        <name>INI1B</name>
        <sequence type="described" ref="VSP_004400"/>
    </isoform>
</comment>
<comment type="developmental stage">
    <text evidence="3">Expressed ubiquitously throughout the developing spinal cord, brain and other embryonic tissues at 10.5 dpc-16.5 dpc.</text>
</comment>
<comment type="domain">
    <text evidence="1">The N-terminal DNA-binding region is structurally similar to winged helix domains.</text>
</comment>
<comment type="similarity">
    <text evidence="9">Belongs to the SNF5 family.</text>
</comment>
<accession>Q9Z0H3</accession>
<proteinExistence type="evidence at protein level"/>
<sequence length="385" mass="44141">MMMMALSKTFGQKPVKFQLEDDGEFYMIGSEVGNYLRMFRGSLYKRYPSLWRRLATVEERKKIVASSHGKKTKPNTKDHGYTTLATSVTLLKASEVEEILDGNDEKYKAVSISTEPPTYLREQKAKRNSQWVPTLPNSSHHLDAVPCSTTINRNRMGRDKKRTFPLCFDDHDPAVIHENASQPEVLVPIRLDMEIDGQKLRDAFTWNMNEKLMTPEMFSEILCDDLDLNPLTFVPAIASAIRQQIESYPTDSILEDQSDQRVIIKLNIHVGNISLVDQFEWDMSEKENSPEKFALKLCSELGLGGEFVTTIAYSIRGQLSWHQKTYAFSENPLPTVEIAIRNTGDADQWCPLLETLTDAEMEKKIRDQDRNTRRMRRLANTAPAW</sequence>
<feature type="chain" id="PRO_0000205949" description="SWI/SNF-related matrix-associated actin-dependent regulator of chromatin subfamily B member 1">
    <location>
        <begin position="1"/>
        <end position="385"/>
    </location>
</feature>
<feature type="repeat" description="1">
    <location>
        <begin position="186"/>
        <end position="245"/>
    </location>
</feature>
<feature type="repeat" description="2">
    <location>
        <begin position="259"/>
        <end position="319"/>
    </location>
</feature>
<feature type="region of interest" description="DNA-binding" evidence="1">
    <location>
        <begin position="1"/>
        <end position="113"/>
    </location>
</feature>
<feature type="region of interest" description="2 X approximate tandem repeats">
    <location>
        <begin position="186"/>
        <end position="319"/>
    </location>
</feature>
<feature type="region of interest" description="MYC-binding" evidence="1">
    <location>
        <begin position="186"/>
        <end position="245"/>
    </location>
</feature>
<feature type="region of interest" description="Interaction with PPP1R15A" evidence="1">
    <location>
        <begin position="304"/>
        <end position="318"/>
    </location>
</feature>
<feature type="modified residue" description="Phosphoserine" evidence="1">
    <location>
        <position position="129"/>
    </location>
</feature>
<feature type="cross-link" description="Glycyl lysine isopeptide (Lys-Gly) (interchain with G-Cter in SUMO2)" evidence="1">
    <location>
        <position position="106"/>
    </location>
</feature>
<feature type="cross-link" description="Glycyl lysine isopeptide (Lys-Gly) (interchain with G-Cter in SUMO2)" evidence="1">
    <location>
        <position position="108"/>
    </location>
</feature>
<feature type="cross-link" description="Glycyl lysine isopeptide (Lys-Gly) (interchain with G-Cter in SUMO2)" evidence="1">
    <location>
        <position position="124"/>
    </location>
</feature>
<feature type="cross-link" description="Glycyl lysine isopeptide (Lys-Gly) (interchain with G-Cter in SUMO2)" evidence="1">
    <location>
        <position position="161"/>
    </location>
</feature>
<feature type="splice variant" id="VSP_004400" description="In isoform B." evidence="6">
    <location>
        <begin position="69"/>
        <end position="77"/>
    </location>
</feature>
<gene>
    <name type="primary">Smarcb1</name>
    <name type="synonym">Baf47</name>
    <name type="synonym">Ini1</name>
    <name type="synonym">Snf5l1</name>
</gene>
<dbReference type="EMBL" id="AJ011740">
    <property type="protein sequence ID" value="CAA09761.1"/>
    <property type="molecule type" value="mRNA"/>
</dbReference>
<dbReference type="EMBL" id="AJ011739">
    <property type="protein sequence ID" value="CAA09760.1"/>
    <property type="molecule type" value="mRNA"/>
</dbReference>
<dbReference type="EMBL" id="BC025163">
    <property type="protein sequence ID" value="AAH25163.1"/>
    <property type="molecule type" value="mRNA"/>
</dbReference>
<dbReference type="CCDS" id="CCDS23936.1">
    <molecule id="Q9Z0H3-1"/>
</dbReference>
<dbReference type="CCDS" id="CCDS48602.1">
    <molecule id="Q9Z0H3-2"/>
</dbReference>
<dbReference type="RefSeq" id="NP_001155325.1">
    <molecule id="Q9Z0H3-2"/>
    <property type="nucleotide sequence ID" value="NM_001161853.1"/>
</dbReference>
<dbReference type="RefSeq" id="NP_035548.1">
    <molecule id="Q9Z0H3-1"/>
    <property type="nucleotide sequence ID" value="NM_011418.2"/>
</dbReference>
<dbReference type="BMRB" id="Q9Z0H3"/>
<dbReference type="SMR" id="Q9Z0H3"/>
<dbReference type="BioGRID" id="203337">
    <property type="interactions" value="20"/>
</dbReference>
<dbReference type="ComplexPortal" id="CPX-1232">
    <property type="entry name" value="SWI/SNF ATP-dependent chromatin remodeling complex, ACTL6A-ARID1A-SMARCA2 variant"/>
</dbReference>
<dbReference type="ComplexPortal" id="CPX-1233">
    <property type="entry name" value="SWI/SNF ATP-dependent chromatin remodeling complex, ACTL6A-ARID1A-SMARCA4 variant"/>
</dbReference>
<dbReference type="ComplexPortal" id="CPX-1234">
    <property type="entry name" value="SWI/SNF ATP-dependent chromatin remodeling complex, ACTL6A-ARID1B-SMARCA2 variant"/>
</dbReference>
<dbReference type="ComplexPortal" id="CPX-1235">
    <property type="entry name" value="SWI/SNF ATP-dependent chromatin remodeling complex, ACTL6A-ARID1B-SMARCA4 variant"/>
</dbReference>
<dbReference type="ComplexPortal" id="CPX-1236">
    <property type="entry name" value="SWI/SNF ATP-dependent chromatin remodeling complex, ACTL6B-ARID1A-SMARCA2 variant"/>
</dbReference>
<dbReference type="ComplexPortal" id="CPX-1237">
    <property type="entry name" value="SWI/SNF ATP-dependent chromatin remodeling complex, ACTL6B-ARID1A-SMARCA4 variant"/>
</dbReference>
<dbReference type="ComplexPortal" id="CPX-1238">
    <property type="entry name" value="SWI/SNF ATP-dependent chromatin remodeling complex, ACTL6B-ARID1B-SMARCA2 variant"/>
</dbReference>
<dbReference type="ComplexPortal" id="CPX-1239">
    <property type="entry name" value="SWI/SNF ATP-dependent chromatin remodeling complex, ACTL6B-ARID1B-SMARCA4 variant"/>
</dbReference>
<dbReference type="ComplexPortal" id="CPX-1240">
    <property type="entry name" value="Muscle cell-specific SWI/SNF ATP-dependent chromatin remodeling complex, ACTL6A-ARID1A-SMARCA2 variant"/>
</dbReference>
<dbReference type="ComplexPortal" id="CPX-1241">
    <property type="entry name" value="Muscle cell-specific SWI/SNF ATP-dependent chromatin remodeling complex, ACTL6A-ARID1A-SMARCA4 variant"/>
</dbReference>
<dbReference type="ComplexPortal" id="CPX-1242">
    <property type="entry name" value="Muscle cell-specific SWI/SNF ATP-dependent chromatin remodeling complex, ACTL6A-ARID1B-SMARCA2 variant"/>
</dbReference>
<dbReference type="ComplexPortal" id="CPX-1243">
    <property type="entry name" value="Muscle cell-specific SWI/SNF ATP-dependent chromatin remodeling complex, ACTL6A-ARID1B-SMARCA4 variant"/>
</dbReference>
<dbReference type="ComplexPortal" id="CPX-1244">
    <property type="entry name" value="Muscle cell-specific SWI/SNF ATP-dependent chromatin remodeling complex, ACTL6B-ARID1A-SMARCA2 variant"/>
</dbReference>
<dbReference type="ComplexPortal" id="CPX-1245">
    <property type="entry name" value="Muscle cell-specific SWI/SNF ATP-dependent chromatin remodeling complex, ACTL6B-ARID1A-SMARCA4 variant"/>
</dbReference>
<dbReference type="ComplexPortal" id="CPX-1246">
    <property type="entry name" value="Muscle cell-specific SWI/SNF ATP-dependent chromatin remodeling complex, ACTL6B-ARID1B-SMARCA2 variant"/>
</dbReference>
<dbReference type="ComplexPortal" id="CPX-1247">
    <property type="entry name" value="Muscle cell-specific SWI/SNF ATP-dependent chromatin remodeling complex, ACTL6B-ARID1B-SMARCA4 variant"/>
</dbReference>
<dbReference type="ComplexPortal" id="CPX-1248">
    <property type="entry name" value="Polybromo-associated SWI/SNF ATP-dependent chromatin remodeling complex, ACTL6A variant"/>
</dbReference>
<dbReference type="ComplexPortal" id="CPX-1250">
    <property type="entry name" value="Polybromo-associated SWI/SNF ATP-dependent chromatin remodeling complex, ACTL6B variant"/>
</dbReference>
<dbReference type="ComplexPortal" id="CPX-1251">
    <property type="entry name" value="Embryonic stem cell-specific SWI/SNF ATP-dependent chromatin remodeling complex"/>
</dbReference>
<dbReference type="ComplexPortal" id="CPX-1252">
    <property type="entry name" value="Neural progenitor-specific SWI/SNF ATP-dependent chromatin remodeling complex, ARID1A-SMARCA2 variant"/>
</dbReference>
<dbReference type="ComplexPortal" id="CPX-1253">
    <property type="entry name" value="Neural progenitor-specific SWI/SNF ATP-dependent chromatin remodeling complex, ARID1A-SMARCA4 variant"/>
</dbReference>
<dbReference type="ComplexPortal" id="CPX-1254">
    <property type="entry name" value="Neural progenitor-specific SWI/SNF ATP-dependent chromatin remodeling complex, ARID1B-SMARCA2 variant"/>
</dbReference>
<dbReference type="ComplexPortal" id="CPX-1255">
    <property type="entry name" value="Neural progenitor-specific SWI/SNF ATP-dependent chromatin remodeling complex, ARID1B-SMARCA4 variant"/>
</dbReference>
<dbReference type="ComplexPortal" id="CPX-1256">
    <property type="entry name" value="Neuron-specific SWI/SNF ATP-dependent chromatin remodeling complex, ARID1A-SMARCA2 variant"/>
</dbReference>
<dbReference type="ComplexPortal" id="CPX-1257">
    <property type="entry name" value="Neuron-specific SWI/SNF ATP-dependent chromatin remodeling complex, ARID1A-SMARCA4 variant"/>
</dbReference>
<dbReference type="ComplexPortal" id="CPX-1258">
    <property type="entry name" value="Neuron-specific SWI/SNF ATP-dependent chromatin remodeling complex, ARID1B-SMARCA2 variant"/>
</dbReference>
<dbReference type="ComplexPortal" id="CPX-1259">
    <property type="entry name" value="Neuron-specific SWI/SNF ATP-dependent chromatin remodeling complex, ARID1B-SMARCA4 variant"/>
</dbReference>
<dbReference type="ComplexPortal" id="CPX-1261">
    <property type="entry name" value="Brain-specific SWI/SNF ATP-dependent chromatin remodeling complex, ARID1A-SMARCA2 variant"/>
</dbReference>
<dbReference type="ComplexPortal" id="CPX-1262">
    <property type="entry name" value="Brain-specific SWI/SNF ATP-dependent chromatin remodeling complex, ARID1A-SMARCA4 variant"/>
</dbReference>
<dbReference type="ComplexPortal" id="CPX-1263">
    <property type="entry name" value="Brain-specific SWI/SNF ATP-dependent chromatin remodeling complex, ARID1B-SMARCA2 variant"/>
</dbReference>
<dbReference type="ComplexPortal" id="CPX-1264">
    <property type="entry name" value="Brain-specific SWI/SNF ATP-dependent chromatin remodeling complex, ARID1B-SMARCA4 variant"/>
</dbReference>
<dbReference type="CORUM" id="Q9Z0H3"/>
<dbReference type="DIP" id="DIP-34373N"/>
<dbReference type="FunCoup" id="Q9Z0H3">
    <property type="interactions" value="2313"/>
</dbReference>
<dbReference type="IntAct" id="Q9Z0H3">
    <property type="interactions" value="12"/>
</dbReference>
<dbReference type="STRING" id="10090.ENSMUSP00000000925"/>
<dbReference type="iPTMnet" id="Q9Z0H3"/>
<dbReference type="PhosphoSitePlus" id="Q9Z0H3"/>
<dbReference type="SwissPalm" id="Q9Z0H3"/>
<dbReference type="PaxDb" id="10090-ENSMUSP00000000925"/>
<dbReference type="ProteomicsDB" id="261592">
    <molecule id="Q9Z0H3-1"/>
</dbReference>
<dbReference type="ProteomicsDB" id="261593">
    <molecule id="Q9Z0H3-2"/>
</dbReference>
<dbReference type="Pumba" id="Q9Z0H3"/>
<dbReference type="Antibodypedia" id="3973">
    <property type="antibodies" value="596 antibodies from 44 providers"/>
</dbReference>
<dbReference type="DNASU" id="20587"/>
<dbReference type="Ensembl" id="ENSMUST00000000925.10">
    <molecule id="Q9Z0H3-1"/>
    <property type="protein sequence ID" value="ENSMUSP00000000925.4"/>
    <property type="gene ID" value="ENSMUSG00000000902.14"/>
</dbReference>
<dbReference type="Ensembl" id="ENSMUST00000121304.2">
    <molecule id="Q9Z0H3-2"/>
    <property type="protein sequence ID" value="ENSMUSP00000112463.2"/>
    <property type="gene ID" value="ENSMUSG00000000902.14"/>
</dbReference>
<dbReference type="GeneID" id="20587"/>
<dbReference type="KEGG" id="mmu:20587"/>
<dbReference type="UCSC" id="uc007ftm.2">
    <molecule id="Q9Z0H3-1"/>
    <property type="organism name" value="mouse"/>
</dbReference>
<dbReference type="AGR" id="MGI:1328366"/>
<dbReference type="CTD" id="6598"/>
<dbReference type="MGI" id="MGI:1328366">
    <property type="gene designation" value="Smarcb1"/>
</dbReference>
<dbReference type="VEuPathDB" id="HostDB:ENSMUSG00000000902"/>
<dbReference type="eggNOG" id="KOG1649">
    <property type="taxonomic scope" value="Eukaryota"/>
</dbReference>
<dbReference type="GeneTree" id="ENSGT00440000038585"/>
<dbReference type="HOGENOM" id="CLU_035084_0_0_1"/>
<dbReference type="InParanoid" id="Q9Z0H3"/>
<dbReference type="OMA" id="PPWVPTM"/>
<dbReference type="OrthoDB" id="515064at2759"/>
<dbReference type="PhylomeDB" id="Q9Z0H3"/>
<dbReference type="TreeFam" id="TF105993"/>
<dbReference type="Reactome" id="R-MMU-3214858">
    <property type="pathway name" value="RMTs methylate histone arginines"/>
</dbReference>
<dbReference type="Reactome" id="R-MMU-8939243">
    <property type="pathway name" value="RUNX1 interacts with co-factors whose precise effect on RUNX1 targets is not known"/>
</dbReference>
<dbReference type="BioGRID-ORCS" id="20587">
    <property type="hits" value="21 hits in 122 CRISPR screens"/>
</dbReference>
<dbReference type="ChiTaRS" id="Smarcb1">
    <property type="organism name" value="mouse"/>
</dbReference>
<dbReference type="PRO" id="PR:Q9Z0H3"/>
<dbReference type="Proteomes" id="UP000000589">
    <property type="component" value="Chromosome 10"/>
</dbReference>
<dbReference type="RNAct" id="Q9Z0H3">
    <property type="molecule type" value="protein"/>
</dbReference>
<dbReference type="Bgee" id="ENSMUSG00000000902">
    <property type="expression patterns" value="Expressed in rostral migratory stream and 279 other cell types or tissues"/>
</dbReference>
<dbReference type="ExpressionAtlas" id="Q9Z0H3">
    <property type="expression patterns" value="baseline and differential"/>
</dbReference>
<dbReference type="GO" id="GO:0140092">
    <property type="term" value="C:bBAF complex"/>
    <property type="evidence" value="ECO:0000303"/>
    <property type="project" value="ComplexPortal"/>
</dbReference>
<dbReference type="GO" id="GO:0035060">
    <property type="term" value="C:brahma complex"/>
    <property type="evidence" value="ECO:0000303"/>
    <property type="project" value="ComplexPortal"/>
</dbReference>
<dbReference type="GO" id="GO:0000785">
    <property type="term" value="C:chromatin"/>
    <property type="evidence" value="ECO:0000303"/>
    <property type="project" value="ComplexPortal"/>
</dbReference>
<dbReference type="GO" id="GO:0001650">
    <property type="term" value="C:fibrillar center"/>
    <property type="evidence" value="ECO:0007669"/>
    <property type="project" value="Ensembl"/>
</dbReference>
<dbReference type="GO" id="GO:0043073">
    <property type="term" value="C:germ cell nucleus"/>
    <property type="evidence" value="ECO:0000314"/>
    <property type="project" value="MGI"/>
</dbReference>
<dbReference type="GO" id="GO:0000776">
    <property type="term" value="C:kinetochore"/>
    <property type="evidence" value="ECO:0000303"/>
    <property type="project" value="ComplexPortal"/>
</dbReference>
<dbReference type="GO" id="GO:0071565">
    <property type="term" value="C:nBAF complex"/>
    <property type="evidence" value="ECO:0000314"/>
    <property type="project" value="UniProtKB"/>
</dbReference>
<dbReference type="GO" id="GO:0071564">
    <property type="term" value="C:npBAF complex"/>
    <property type="evidence" value="ECO:0000314"/>
    <property type="project" value="UniProtKB"/>
</dbReference>
<dbReference type="GO" id="GO:0000228">
    <property type="term" value="C:nuclear chromosome"/>
    <property type="evidence" value="ECO:0007669"/>
    <property type="project" value="InterPro"/>
</dbReference>
<dbReference type="GO" id="GO:0016363">
    <property type="term" value="C:nuclear matrix"/>
    <property type="evidence" value="ECO:0000303"/>
    <property type="project" value="ComplexPortal"/>
</dbReference>
<dbReference type="GO" id="GO:0005654">
    <property type="term" value="C:nucleoplasm"/>
    <property type="evidence" value="ECO:0000304"/>
    <property type="project" value="Reactome"/>
</dbReference>
<dbReference type="GO" id="GO:0005634">
    <property type="term" value="C:nucleus"/>
    <property type="evidence" value="ECO:0000314"/>
    <property type="project" value="MGI"/>
</dbReference>
<dbReference type="GO" id="GO:0016586">
    <property type="term" value="C:RSC-type complex"/>
    <property type="evidence" value="ECO:0000303"/>
    <property type="project" value="ComplexPortal"/>
</dbReference>
<dbReference type="GO" id="GO:0016514">
    <property type="term" value="C:SWI/SNF complex"/>
    <property type="evidence" value="ECO:0000314"/>
    <property type="project" value="MGI"/>
</dbReference>
<dbReference type="GO" id="GO:0001741">
    <property type="term" value="C:XY body"/>
    <property type="evidence" value="ECO:0000314"/>
    <property type="project" value="UniProtKB"/>
</dbReference>
<dbReference type="GO" id="GO:0003677">
    <property type="term" value="F:DNA binding"/>
    <property type="evidence" value="ECO:0000250"/>
    <property type="project" value="UniProtKB"/>
</dbReference>
<dbReference type="GO" id="GO:0042802">
    <property type="term" value="F:identical protein binding"/>
    <property type="evidence" value="ECO:0007669"/>
    <property type="project" value="Ensembl"/>
</dbReference>
<dbReference type="GO" id="GO:0002039">
    <property type="term" value="F:p53 binding"/>
    <property type="evidence" value="ECO:0007669"/>
    <property type="project" value="Ensembl"/>
</dbReference>
<dbReference type="GO" id="GO:0001164">
    <property type="term" value="F:RNA polymerase I core promoter sequence-specific DNA binding"/>
    <property type="evidence" value="ECO:0007669"/>
    <property type="project" value="Ensembl"/>
</dbReference>
<dbReference type="GO" id="GO:0030957">
    <property type="term" value="F:Tat protein binding"/>
    <property type="evidence" value="ECO:0007669"/>
    <property type="project" value="Ensembl"/>
</dbReference>
<dbReference type="GO" id="GO:0003713">
    <property type="term" value="F:transcription coactivator activity"/>
    <property type="evidence" value="ECO:0007669"/>
    <property type="project" value="Ensembl"/>
</dbReference>
<dbReference type="GO" id="GO:0001824">
    <property type="term" value="P:blastocyst development"/>
    <property type="evidence" value="ECO:0000315"/>
    <property type="project" value="MGI"/>
</dbReference>
<dbReference type="GO" id="GO:0001835">
    <property type="term" value="P:blastocyst hatching"/>
    <property type="evidence" value="ECO:0000315"/>
    <property type="project" value="MGI"/>
</dbReference>
<dbReference type="GO" id="GO:0006338">
    <property type="term" value="P:chromatin remodeling"/>
    <property type="evidence" value="ECO:0000303"/>
    <property type="project" value="ComplexPortal"/>
</dbReference>
<dbReference type="GO" id="GO:0070365">
    <property type="term" value="P:hepatocyte differentiation"/>
    <property type="evidence" value="ECO:0000315"/>
    <property type="project" value="MGI"/>
</dbReference>
<dbReference type="GO" id="GO:0008285">
    <property type="term" value="P:negative regulation of cell population proliferation"/>
    <property type="evidence" value="ECO:0000315"/>
    <property type="project" value="MGI"/>
</dbReference>
<dbReference type="GO" id="GO:0007399">
    <property type="term" value="P:nervous system development"/>
    <property type="evidence" value="ECO:0007669"/>
    <property type="project" value="UniProtKB-KW"/>
</dbReference>
<dbReference type="GO" id="GO:0006337">
    <property type="term" value="P:nucleosome disassembly"/>
    <property type="evidence" value="ECO:0007669"/>
    <property type="project" value="Ensembl"/>
</dbReference>
<dbReference type="GO" id="GO:0043923">
    <property type="term" value="P:positive regulation by host of viral transcription"/>
    <property type="evidence" value="ECO:0007669"/>
    <property type="project" value="Ensembl"/>
</dbReference>
<dbReference type="GO" id="GO:0045597">
    <property type="term" value="P:positive regulation of cell differentiation"/>
    <property type="evidence" value="ECO:0000303"/>
    <property type="project" value="ComplexPortal"/>
</dbReference>
<dbReference type="GO" id="GO:2000781">
    <property type="term" value="P:positive regulation of double-strand break repair"/>
    <property type="evidence" value="ECO:0000303"/>
    <property type="project" value="ComplexPortal"/>
</dbReference>
<dbReference type="GO" id="GO:1902661">
    <property type="term" value="P:positive regulation of glucose mediated signaling pathway"/>
    <property type="evidence" value="ECO:0007669"/>
    <property type="project" value="Ensembl"/>
</dbReference>
<dbReference type="GO" id="GO:0045663">
    <property type="term" value="P:positive regulation of myoblast differentiation"/>
    <property type="evidence" value="ECO:0000303"/>
    <property type="project" value="ComplexPortal"/>
</dbReference>
<dbReference type="GO" id="GO:1902459">
    <property type="term" value="P:positive regulation of stem cell population maintenance"/>
    <property type="evidence" value="ECO:0000303"/>
    <property type="project" value="ComplexPortal"/>
</dbReference>
<dbReference type="GO" id="GO:0045582">
    <property type="term" value="P:positive regulation of T cell differentiation"/>
    <property type="evidence" value="ECO:0000303"/>
    <property type="project" value="ComplexPortal"/>
</dbReference>
<dbReference type="GO" id="GO:0045944">
    <property type="term" value="P:positive regulation of transcription by RNA polymerase II"/>
    <property type="evidence" value="ECO:0007669"/>
    <property type="project" value="Ensembl"/>
</dbReference>
<dbReference type="GO" id="GO:1901838">
    <property type="term" value="P:positive regulation of transcription of nucleolar large rRNA by RNA polymerase I"/>
    <property type="evidence" value="ECO:0007669"/>
    <property type="project" value="Ensembl"/>
</dbReference>
<dbReference type="GO" id="GO:0070316">
    <property type="term" value="P:regulation of G0 to G1 transition"/>
    <property type="evidence" value="ECO:0000303"/>
    <property type="project" value="ComplexPortal"/>
</dbReference>
<dbReference type="GO" id="GO:2000045">
    <property type="term" value="P:regulation of G1/S transition of mitotic cell cycle"/>
    <property type="evidence" value="ECO:0000303"/>
    <property type="project" value="ComplexPortal"/>
</dbReference>
<dbReference type="GO" id="GO:0030071">
    <property type="term" value="P:regulation of mitotic metaphase/anaphase transition"/>
    <property type="evidence" value="ECO:0000303"/>
    <property type="project" value="ComplexPortal"/>
</dbReference>
<dbReference type="GO" id="GO:2000819">
    <property type="term" value="P:regulation of nucleotide-excision repair"/>
    <property type="evidence" value="ECO:0000303"/>
    <property type="project" value="ComplexPortal"/>
</dbReference>
<dbReference type="GO" id="GO:0006357">
    <property type="term" value="P:regulation of transcription by RNA polymerase II"/>
    <property type="evidence" value="ECO:0000303"/>
    <property type="project" value="ComplexPortal"/>
</dbReference>
<dbReference type="GO" id="GO:0039692">
    <property type="term" value="P:single stranded viral RNA replication via double stranded DNA intermediate"/>
    <property type="evidence" value="ECO:0000266"/>
    <property type="project" value="MGI"/>
</dbReference>
<dbReference type="GO" id="GO:0045815">
    <property type="term" value="P:transcription initiation-coupled chromatin remodeling"/>
    <property type="evidence" value="ECO:0007669"/>
    <property type="project" value="Ensembl"/>
</dbReference>
<dbReference type="CDD" id="cd21086">
    <property type="entry name" value="WH_NTD_SMARCB1"/>
    <property type="match status" value="1"/>
</dbReference>
<dbReference type="InterPro" id="IPR048664">
    <property type="entry name" value="INI1_DNA-bd"/>
</dbReference>
<dbReference type="InterPro" id="IPR017393">
    <property type="entry name" value="Sfh1/SNF5"/>
</dbReference>
<dbReference type="InterPro" id="IPR006939">
    <property type="entry name" value="SNF5"/>
</dbReference>
<dbReference type="PANTHER" id="PTHR10019">
    <property type="entry name" value="SNF5"/>
    <property type="match status" value="1"/>
</dbReference>
<dbReference type="Pfam" id="PF21459">
    <property type="entry name" value="INI1_DNA-bd"/>
    <property type="match status" value="1"/>
</dbReference>
<dbReference type="Pfam" id="PF04855">
    <property type="entry name" value="SNF5"/>
    <property type="match status" value="1"/>
</dbReference>
<dbReference type="PIRSF" id="PIRSF038126">
    <property type="entry name" value="SWI_SNF"/>
    <property type="match status" value="1"/>
</dbReference>
<reference key="1">
    <citation type="journal article" date="1999" name="Biochem. Biophys. Res. Commun.">
        <title>The mouse ortholog of the human SMARCB1 gene encodes two splice forms.</title>
        <authorList>
            <person name="Bruder C.E."/>
            <person name="Dumanski J.P."/>
            <person name="Kedra D."/>
        </authorList>
    </citation>
    <scope>NUCLEOTIDE SEQUENCE [MRNA] (ISOFORMS A AND B)</scope>
</reference>
<reference key="2">
    <citation type="journal article" date="2004" name="Genome Res.">
        <title>The status, quality, and expansion of the NIH full-length cDNA project: the Mammalian Gene Collection (MGC).</title>
        <authorList>
            <consortium name="The MGC Project Team"/>
        </authorList>
    </citation>
    <scope>NUCLEOTIDE SEQUENCE [LARGE SCALE MRNA] (ISOFORM A)</scope>
    <source>
        <strain>C57BL/6J</strain>
        <tissue>Tongue</tissue>
    </source>
</reference>
<reference key="3">
    <citation type="journal article" date="2006" name="Hum. Mol. Genet.">
        <title>Mouse MAELSTROM: the link between meiotic silencing of unsynapsed chromatin and microRNA pathway?</title>
        <authorList>
            <person name="Costa Y."/>
            <person name="Speed R.M."/>
            <person name="Gautier P."/>
            <person name="Semple C.A."/>
            <person name="Maratou K."/>
            <person name="Turner J.M.A."/>
            <person name="Cooke H.J."/>
        </authorList>
    </citation>
    <scope>INTERACTION WITH MAEL</scope>
</reference>
<reference key="4">
    <citation type="journal article" date="2007" name="Neuron">
        <title>An essential switch in subunit composition of a chromatin remodeling complex during neural development.</title>
        <authorList>
            <person name="Lessard J."/>
            <person name="Wu J.I."/>
            <person name="Ranish J.A."/>
            <person name="Wan M."/>
            <person name="Winslow M.M."/>
            <person name="Staahl B.T."/>
            <person name="Wu H."/>
            <person name="Aebersold R."/>
            <person name="Graef I.A."/>
            <person name="Crabtree G.R."/>
        </authorList>
    </citation>
    <scope>FUNCTION OF THE NBAF AND NPBAF COMPLEXES</scope>
    <scope>IDENTIFICATION BY MASS SPECTROMETRY</scope>
    <scope>IDENTIFICATION IN THE NBAF AND NPBAF COMPLEXES</scope>
    <scope>DEVELOPMENTAL STAGE</scope>
</reference>
<reference key="5">
    <citation type="journal article" date="2010" name="Cell">
        <title>A tissue-specific atlas of mouse protein phosphorylation and expression.</title>
        <authorList>
            <person name="Huttlin E.L."/>
            <person name="Jedrychowski M.P."/>
            <person name="Elias J.E."/>
            <person name="Goswami T."/>
            <person name="Rad R."/>
            <person name="Beausoleil S.A."/>
            <person name="Villen J."/>
            <person name="Haas W."/>
            <person name="Sowa M.E."/>
            <person name="Gygi S.P."/>
        </authorList>
    </citation>
    <scope>IDENTIFICATION BY MASS SPECTROMETRY [LARGE SCALE ANALYSIS]</scope>
    <source>
        <tissue>Brain</tissue>
        <tissue>Spleen</tissue>
        <tissue>Testis</tissue>
    </source>
</reference>
<reference key="6">
    <citation type="journal article" date="2010" name="EMBO J.">
        <title>Crosstalk between C/EBPbeta phosphorylation, arginine methylation, and SWI/SNF/Mediator implies an indexing transcription factor code.</title>
        <authorList>
            <person name="Kowenz-Leutz E."/>
            <person name="Pless O."/>
            <person name="Dittmar G."/>
            <person name="Knoblich M."/>
            <person name="Leutz A."/>
        </authorList>
    </citation>
    <scope>INTERACTION WITH CEBPB</scope>
</reference>
<reference key="7">
    <citation type="journal article" date="2012" name="J. Biol. Chem.">
        <title>SWI/SNF chromatin-remodeling factors: multiscale analyses and diverse functions.</title>
        <authorList>
            <person name="Euskirchen G."/>
            <person name="Auerbach R.K."/>
            <person name="Snyder M."/>
        </authorList>
    </citation>
    <scope>REVIEW ON SWI/SNF CHROMATIN REMODELING COMPLEXES</scope>
</reference>
<reference key="8">
    <citation type="journal article" date="2015" name="Sci. Adv.">
        <title>Mammalian SWI/SNF chromatin remodeling complexes and cancer: Mechanistic insights gained from human genomics.</title>
        <authorList>
            <person name="Kadoch C."/>
            <person name="Crabtree G.R."/>
        </authorList>
    </citation>
    <scope>REVIEW ON SWI/SNF CHROMATIN REMODELING COMPLEXES</scope>
</reference>
<reference key="9">
    <citation type="journal article" date="2017" name="Mol. Cell">
        <title>AP-1 Transcription Factors and the BAF Complex Mediate Signal-Dependent Enhancer Selection.</title>
        <authorList>
            <person name="Vierbuchen T."/>
            <person name="Ling E."/>
            <person name="Cowley C.J."/>
            <person name="Couch C.H."/>
            <person name="Wang X."/>
            <person name="Harmin D.A."/>
            <person name="Roberts C.W.M."/>
            <person name="Greenberg M.E."/>
        </authorList>
    </citation>
    <scope>INTERACTION WITH FOS; FOSB; FOSL1 AND FOSL2</scope>
</reference>
<protein>
    <recommendedName>
        <fullName>SWI/SNF-related matrix-associated actin-dependent regulator of chromatin subfamily B member 1</fullName>
    </recommendedName>
    <alternativeName>
        <fullName>BRG1-associated factor 47</fullName>
        <shortName>BAF47</shortName>
    </alternativeName>
    <alternativeName>
        <fullName>Integrase interactor 1 protein</fullName>
    </alternativeName>
    <alternativeName>
        <fullName>SNF5 homolog</fullName>
        <shortName>mSNF5</shortName>
    </alternativeName>
</protein>
<evidence type="ECO:0000250" key="1">
    <source>
        <dbReference type="UniProtKB" id="Q12824"/>
    </source>
</evidence>
<evidence type="ECO:0000269" key="2">
    <source>
    </source>
</evidence>
<evidence type="ECO:0000269" key="3">
    <source>
    </source>
</evidence>
<evidence type="ECO:0000269" key="4">
    <source>
    </source>
</evidence>
<evidence type="ECO:0000269" key="5">
    <source>
    </source>
</evidence>
<evidence type="ECO:0000303" key="6">
    <source>
    </source>
</evidence>
<evidence type="ECO:0000303" key="7">
    <source>
    </source>
</evidence>
<evidence type="ECO:0000303" key="8">
    <source>
    </source>
</evidence>
<evidence type="ECO:0000305" key="9"/>
<name>SNF5_MOUSE</name>